<proteinExistence type="evidence at protein level"/>
<feature type="signal peptide" evidence="1">
    <location>
        <begin position="1"/>
        <end position="17"/>
    </location>
</feature>
<feature type="chain" id="PRO_0000412719" description="Putative neuropeptide precursor protein" evidence="1">
    <location>
        <begin position="18"/>
        <end position="372"/>
    </location>
</feature>
<feature type="region of interest" description="Disordered" evidence="2">
    <location>
        <begin position="18"/>
        <end position="89"/>
    </location>
</feature>
<feature type="region of interest" description="Disordered" evidence="2">
    <location>
        <begin position="136"/>
        <end position="208"/>
    </location>
</feature>
<feature type="compositionally biased region" description="Polar residues" evidence="2">
    <location>
        <begin position="19"/>
        <end position="31"/>
    </location>
</feature>
<feature type="compositionally biased region" description="Basic and acidic residues" evidence="2">
    <location>
        <begin position="38"/>
        <end position="57"/>
    </location>
</feature>
<feature type="compositionally biased region" description="Polar residues" evidence="2">
    <location>
        <begin position="72"/>
        <end position="89"/>
    </location>
</feature>
<feature type="compositionally biased region" description="Low complexity" evidence="2">
    <location>
        <begin position="177"/>
        <end position="191"/>
    </location>
</feature>
<sequence length="372" mass="42011">MLLFSLTAITAVLAVSAVPTPSNNKDGSTISELPENWDQTKDDNRSLFLNKSDKNDLEPYPLALSEEGNQDGYDQTVDQRFDSPQSNGELDNLIMRPELYGEPPAMEGLASAFDLQRRKRGSGTKVGGAGAATKVVTKSGSGKKNLKPEDQAALSPIDLMTQHEAQRRKRGSGTKVGGAAASAKTATKNSGGNKKNFRPISERRKRDSGLSAADVRALLNLWEAQERRKQEYANQFAADRYYGRVNPDEEQPEVDENGDLWYNEPVVIGPHDRDYPHHSYFSEQNRMALARGYPDLYQVGPNELAQRYEEARRKRQYANKMKRFMVAKKRSDNMMHQNNYRPRDDLYTLAELLRSAPRVQEQDIPVYRRLIL</sequence>
<name>NEUPP_BOMMO</name>
<keyword id="KW-0963">Cytoplasm</keyword>
<keyword id="KW-1185">Reference proteome</keyword>
<keyword id="KW-0964">Secreted</keyword>
<keyword id="KW-0732">Signal</keyword>
<accession>B9WZ56</accession>
<protein>
    <recommendedName>
        <fullName evidence="4">Putative neuropeptide precursor protein</fullName>
        <shortName evidence="4">BmK5</shortName>
    </recommendedName>
</protein>
<evidence type="ECO:0000255" key="1"/>
<evidence type="ECO:0000256" key="2">
    <source>
        <dbReference type="SAM" id="MobiDB-lite"/>
    </source>
</evidence>
<evidence type="ECO:0000269" key="3">
    <source>
    </source>
</evidence>
<evidence type="ECO:0000303" key="4">
    <source>
    </source>
</evidence>
<evidence type="ECO:0000305" key="5"/>
<evidence type="ECO:0000312" key="6">
    <source>
        <dbReference type="EMBL" id="BAH22627.1"/>
    </source>
</evidence>
<organism>
    <name type="scientific">Bombyx mori</name>
    <name type="common">Silk moth</name>
    <dbReference type="NCBI Taxonomy" id="7091"/>
    <lineage>
        <taxon>Eukaryota</taxon>
        <taxon>Metazoa</taxon>
        <taxon>Ecdysozoa</taxon>
        <taxon>Arthropoda</taxon>
        <taxon>Hexapoda</taxon>
        <taxon>Insecta</taxon>
        <taxon>Pterygota</taxon>
        <taxon>Neoptera</taxon>
        <taxon>Endopterygota</taxon>
        <taxon>Lepidoptera</taxon>
        <taxon>Glossata</taxon>
        <taxon>Ditrysia</taxon>
        <taxon>Bombycoidea</taxon>
        <taxon>Bombycidae</taxon>
        <taxon>Bombycinae</taxon>
        <taxon>Bombyx</taxon>
    </lineage>
</organism>
<reference evidence="5 6" key="1">
    <citation type="journal article" date="2009" name="Peptides">
        <title>Novel gene encoding precursor protein consisting of possible several neuropeptides expressed in brain and frontal ganglion of the silkworm, Bombyx mori.</title>
        <authorList>
            <person name="Mitsumasu K."/>
            <person name="Tanaka Y."/>
            <person name="Niimi T."/>
            <person name="Yamashita O."/>
            <person name="Yaginuma T."/>
        </authorList>
    </citation>
    <scope>NUCLEOTIDE SEQUENCE [MRNA]</scope>
    <scope>SUBCELLULAR LOCATION</scope>
    <scope>TISSUE SPECIFICITY</scope>
    <scope>DEVELOPMENTAL STAGE</scope>
    <source>
        <strain>p50T</strain>
        <tissue>Subesophageal ganglion</tissue>
    </source>
</reference>
<comment type="subcellular location">
    <subcellularLocation>
        <location evidence="3 5">Cytoplasm</location>
    </subcellularLocation>
    <subcellularLocation>
        <location evidence="5">Secreted</location>
    </subcellularLocation>
</comment>
<comment type="tissue specificity">
    <text evidence="3">Detected in the brain and frontal ganglion and in the axons connecting to the corpus cardiacum and corpus allatum (at protein level). Detected in the brain-subesophageal ganglion (brain-SG) complex, fat body, midgut and ovary. Expression in the brain-SG complex is 2-3 times higher than in the other tissues.</text>
</comment>
<comment type="developmental stage">
    <text evidence="3">Detected at low levels in newly hatched larvae with higher levels in the fifth instar larvae which continue into the early and middle pupal stages. Expression then decreases by 6-day-old pupal stage and reduces further in the adult stage (at protein level). Expressed in the embryonic, larval and pupal-adult development stages. Detected in male embryos 6 days after oviposition with expression in female embryos starting later around day 8.</text>
</comment>
<comment type="PTM">
    <text evidence="4">May be proteolytically processed to give rise to a number of active peptides.</text>
</comment>
<dbReference type="EMBL" id="AB162718">
    <property type="protein sequence ID" value="BAH22627.1"/>
    <property type="molecule type" value="mRNA"/>
</dbReference>
<dbReference type="RefSeq" id="NP_001153662.1">
    <property type="nucleotide sequence ID" value="NM_001160190.1"/>
</dbReference>
<dbReference type="SMR" id="B9WZ56"/>
<dbReference type="STRING" id="7091.B9WZ56"/>
<dbReference type="PaxDb" id="7091-BGIBMGA008978-TA"/>
<dbReference type="EnsemblMetazoa" id="NM_001160190.1">
    <property type="protein sequence ID" value="NP_001153662.1"/>
    <property type="gene ID" value="GeneID_100301494"/>
</dbReference>
<dbReference type="GeneID" id="100301494"/>
<dbReference type="KEGG" id="bmor:100301494"/>
<dbReference type="CTD" id="100301494"/>
<dbReference type="eggNOG" id="ENOG502TB3T">
    <property type="taxonomic scope" value="Eukaryota"/>
</dbReference>
<dbReference type="HOGENOM" id="CLU_750637_0_0_1"/>
<dbReference type="InParanoid" id="B9WZ56"/>
<dbReference type="OMA" id="ENWDQTK"/>
<dbReference type="OrthoDB" id="378351at7088"/>
<dbReference type="Proteomes" id="UP000005204">
    <property type="component" value="Unassembled WGS sequence"/>
</dbReference>
<dbReference type="GO" id="GO:0005737">
    <property type="term" value="C:cytoplasm"/>
    <property type="evidence" value="ECO:0007669"/>
    <property type="project" value="UniProtKB-SubCell"/>
</dbReference>
<dbReference type="GO" id="GO:0005576">
    <property type="term" value="C:extracellular region"/>
    <property type="evidence" value="ECO:0007669"/>
    <property type="project" value="UniProtKB-SubCell"/>
</dbReference>